<evidence type="ECO:0000255" key="1">
    <source>
        <dbReference type="HAMAP-Rule" id="MF_01984"/>
    </source>
</evidence>
<evidence type="ECO:0007829" key="2">
    <source>
        <dbReference type="PDB" id="7KM2"/>
    </source>
</evidence>
<evidence type="ECO:0007829" key="3">
    <source>
        <dbReference type="PDB" id="7KM3"/>
    </source>
</evidence>
<accession>O84222</accession>
<organism>
    <name type="scientific">Chlamydia trachomatis serovar D (strain ATCC VR-885 / DSM 19411 / UW-3/Cx)</name>
    <dbReference type="NCBI Taxonomy" id="272561"/>
    <lineage>
        <taxon>Bacteria</taxon>
        <taxon>Pseudomonadati</taxon>
        <taxon>Chlamydiota</taxon>
        <taxon>Chlamydiia</taxon>
        <taxon>Chlamydiales</taxon>
        <taxon>Chlamydiaceae</taxon>
        <taxon>Chlamydia/Chlamydophila group</taxon>
        <taxon>Chlamydia</taxon>
    </lineage>
</organism>
<comment type="function">
    <text evidence="1">Flavin prenyltransferase that catalyzes the synthesis of the prenylated FMN cofactor (prenyl-FMN) for 4-hydroxy-3-polyprenylbenzoic acid decarboxylase UbiD. The prenyltransferase is metal-independent and links a dimethylallyl moiety from dimethylallyl monophosphate (DMAP) to the flavin N5 and C6 atoms of FMN.</text>
</comment>
<comment type="catalytic activity">
    <reaction evidence="1">
        <text>dimethylallyl phosphate + FMNH2 = prenylated FMNH2 + phosphate</text>
        <dbReference type="Rhea" id="RHEA:37743"/>
        <dbReference type="ChEBI" id="CHEBI:43474"/>
        <dbReference type="ChEBI" id="CHEBI:57618"/>
        <dbReference type="ChEBI" id="CHEBI:87467"/>
        <dbReference type="ChEBI" id="CHEBI:88052"/>
        <dbReference type="EC" id="2.5.1.129"/>
    </reaction>
</comment>
<comment type="similarity">
    <text evidence="1">Belongs to the UbiX/PAD1 family.</text>
</comment>
<name>UBIX_CHLTR</name>
<feature type="chain" id="PRO_0000134961" description="Flavin prenyltransferase UbiX">
    <location>
        <begin position="1"/>
        <end position="192"/>
    </location>
</feature>
<feature type="binding site" evidence="1">
    <location>
        <begin position="10"/>
        <end position="12"/>
    </location>
    <ligand>
        <name>FMN</name>
        <dbReference type="ChEBI" id="CHEBI:58210"/>
    </ligand>
</feature>
<feature type="binding site" evidence="1">
    <location>
        <position position="36"/>
    </location>
    <ligand>
        <name>FMN</name>
        <dbReference type="ChEBI" id="CHEBI:58210"/>
    </ligand>
</feature>
<feature type="binding site" evidence="1">
    <location>
        <begin position="92"/>
        <end position="95"/>
    </location>
    <ligand>
        <name>FMN</name>
        <dbReference type="ChEBI" id="CHEBI:58210"/>
    </ligand>
</feature>
<feature type="binding site" evidence="1">
    <location>
        <position position="127"/>
    </location>
    <ligand>
        <name>FMN</name>
        <dbReference type="ChEBI" id="CHEBI:58210"/>
    </ligand>
</feature>
<feature type="binding site" evidence="1">
    <location>
        <position position="157"/>
    </location>
    <ligand>
        <name>dimethylallyl phosphate</name>
        <dbReference type="ChEBI" id="CHEBI:88052"/>
    </ligand>
</feature>
<feature type="binding site" evidence="1">
    <location>
        <position position="173"/>
    </location>
    <ligand>
        <name>dimethylallyl phosphate</name>
        <dbReference type="ChEBI" id="CHEBI:88052"/>
    </ligand>
</feature>
<feature type="strand" evidence="2">
    <location>
        <begin position="3"/>
        <end position="8"/>
    </location>
</feature>
<feature type="strand" evidence="3">
    <location>
        <begin position="10"/>
        <end position="12"/>
    </location>
</feature>
<feature type="helix" evidence="2">
    <location>
        <begin position="14"/>
        <end position="26"/>
    </location>
</feature>
<feature type="strand" evidence="2">
    <location>
        <begin position="30"/>
        <end position="35"/>
    </location>
</feature>
<feature type="helix" evidence="2">
    <location>
        <begin position="37"/>
        <end position="40"/>
    </location>
</feature>
<feature type="helix" evidence="2">
    <location>
        <begin position="53"/>
        <end position="55"/>
    </location>
</feature>
<feature type="helix" evidence="2">
    <location>
        <begin position="58"/>
        <end position="63"/>
    </location>
</feature>
<feature type="strand" evidence="2">
    <location>
        <begin position="64"/>
        <end position="67"/>
    </location>
</feature>
<feature type="helix" evidence="2">
    <location>
        <begin position="75"/>
        <end position="77"/>
    </location>
</feature>
<feature type="strand" evidence="2">
    <location>
        <begin position="85"/>
        <end position="91"/>
    </location>
</feature>
<feature type="helix" evidence="2">
    <location>
        <begin position="93"/>
        <end position="101"/>
    </location>
</feature>
<feature type="helix" evidence="2">
    <location>
        <begin position="107"/>
        <end position="117"/>
    </location>
</feature>
<feature type="strand" evidence="2">
    <location>
        <begin position="122"/>
        <end position="126"/>
    </location>
</feature>
<feature type="helix" evidence="2">
    <location>
        <begin position="133"/>
        <end position="144"/>
    </location>
</feature>
<feature type="helix" evidence="2">
    <location>
        <begin position="163"/>
        <end position="177"/>
    </location>
</feature>
<protein>
    <recommendedName>
        <fullName evidence="1">Flavin prenyltransferase UbiX</fullName>
        <ecNumber evidence="1">2.5.1.129</ecNumber>
    </recommendedName>
</protein>
<reference key="1">
    <citation type="journal article" date="1998" name="Science">
        <title>Genome sequence of an obligate intracellular pathogen of humans: Chlamydia trachomatis.</title>
        <authorList>
            <person name="Stephens R.S."/>
            <person name="Kalman S."/>
            <person name="Lammel C.J."/>
            <person name="Fan J."/>
            <person name="Marathe R."/>
            <person name="Aravind L."/>
            <person name="Mitchell W.P."/>
            <person name="Olinger L."/>
            <person name="Tatusov R.L."/>
            <person name="Zhao Q."/>
            <person name="Koonin E.V."/>
            <person name="Davis R.W."/>
        </authorList>
    </citation>
    <scope>NUCLEOTIDE SEQUENCE [LARGE SCALE GENOMIC DNA]</scope>
    <source>
        <strain>ATCC VR-885 / DSM 19411 / UW-3/Cx</strain>
    </source>
</reference>
<keyword id="KW-0002">3D-structure</keyword>
<keyword id="KW-0285">Flavoprotein</keyword>
<keyword id="KW-0288">FMN</keyword>
<keyword id="KW-0637">Prenyltransferase</keyword>
<keyword id="KW-1185">Reference proteome</keyword>
<keyword id="KW-0808">Transferase</keyword>
<gene>
    <name evidence="1" type="primary">ubiX</name>
    <name type="ordered locus">CT_220</name>
</gene>
<dbReference type="EC" id="2.5.1.129" evidence="1"/>
<dbReference type="EMBL" id="AE001273">
    <property type="protein sequence ID" value="AAC67812.1"/>
    <property type="molecule type" value="Genomic_DNA"/>
</dbReference>
<dbReference type="PIR" id="C71543">
    <property type="entry name" value="C71543"/>
</dbReference>
<dbReference type="RefSeq" id="NP_219724.1">
    <property type="nucleotide sequence ID" value="NC_000117.1"/>
</dbReference>
<dbReference type="RefSeq" id="WP_009871566.1">
    <property type="nucleotide sequence ID" value="NC_000117.1"/>
</dbReference>
<dbReference type="PDB" id="7KM2">
    <property type="method" value="X-ray"/>
    <property type="resolution" value="2.19 A"/>
    <property type="chains" value="A/B/C/D/E/F/G/H/I/J/K/L=1-192"/>
</dbReference>
<dbReference type="PDB" id="7KM3">
    <property type="method" value="X-ray"/>
    <property type="resolution" value="2.26 A"/>
    <property type="chains" value="A/B/C/D/E/F/G/H/I/J/K/L=1-192"/>
</dbReference>
<dbReference type="PDBsum" id="7KM2"/>
<dbReference type="PDBsum" id="7KM3"/>
<dbReference type="SMR" id="O84222"/>
<dbReference type="FunCoup" id="O84222">
    <property type="interactions" value="80"/>
</dbReference>
<dbReference type="STRING" id="272561.CT_220"/>
<dbReference type="EnsemblBacteria" id="AAC67812">
    <property type="protein sequence ID" value="AAC67812"/>
    <property type="gene ID" value="CT_220"/>
</dbReference>
<dbReference type="GeneID" id="884904"/>
<dbReference type="KEGG" id="ctr:CT_220"/>
<dbReference type="PATRIC" id="fig|272561.5.peg.235"/>
<dbReference type="HOGENOM" id="CLU_074522_0_1_0"/>
<dbReference type="InParanoid" id="O84222"/>
<dbReference type="OrthoDB" id="9781577at2"/>
<dbReference type="Proteomes" id="UP000000431">
    <property type="component" value="Chromosome"/>
</dbReference>
<dbReference type="GO" id="GO:0016831">
    <property type="term" value="F:carboxy-lyase activity"/>
    <property type="evidence" value="ECO:0000318"/>
    <property type="project" value="GO_Central"/>
</dbReference>
<dbReference type="GO" id="GO:0106141">
    <property type="term" value="F:flavin prenyltransferase activity"/>
    <property type="evidence" value="ECO:0007669"/>
    <property type="project" value="UniProtKB-EC"/>
</dbReference>
<dbReference type="Gene3D" id="3.40.50.1950">
    <property type="entry name" value="Flavin prenyltransferase-like"/>
    <property type="match status" value="1"/>
</dbReference>
<dbReference type="HAMAP" id="MF_01984">
    <property type="entry name" value="ubiX_pad"/>
    <property type="match status" value="1"/>
</dbReference>
<dbReference type="InterPro" id="IPR036551">
    <property type="entry name" value="Flavin_trans-like"/>
</dbReference>
<dbReference type="InterPro" id="IPR003382">
    <property type="entry name" value="Flavoprotein"/>
</dbReference>
<dbReference type="InterPro" id="IPR004507">
    <property type="entry name" value="UbiX-like"/>
</dbReference>
<dbReference type="NCBIfam" id="NF004685">
    <property type="entry name" value="PRK06029.1"/>
    <property type="match status" value="1"/>
</dbReference>
<dbReference type="NCBIfam" id="TIGR00421">
    <property type="entry name" value="ubiX_pad"/>
    <property type="match status" value="1"/>
</dbReference>
<dbReference type="PANTHER" id="PTHR43374">
    <property type="entry name" value="FLAVIN PRENYLTRANSFERASE"/>
    <property type="match status" value="1"/>
</dbReference>
<dbReference type="PANTHER" id="PTHR43374:SF1">
    <property type="entry name" value="FLAVIN PRENYLTRANSFERASE PAD1, MITOCHONDRIAL"/>
    <property type="match status" value="1"/>
</dbReference>
<dbReference type="Pfam" id="PF02441">
    <property type="entry name" value="Flavoprotein"/>
    <property type="match status" value="1"/>
</dbReference>
<dbReference type="SUPFAM" id="SSF52507">
    <property type="entry name" value="Homo-oligomeric flavin-containing Cys decarboxylases, HFCD"/>
    <property type="match status" value="1"/>
</dbReference>
<proteinExistence type="evidence at protein level"/>
<sequence>MKRYVVGISGASGIVLAVTLVSELARLGHHIDVIISPSAQKTLYYELDTKSFLSTIPQNFHNQIVLHHISSIESSVSSGSNTIDATIIVPCSVATVAAISCGLADNLLRRVADVALKEKRPLILVPREAPLSAIHLENLLKLAQNGAVILPPMPIWYFKPQTAEDIANDIVGKILAILQLDSPLIKRWENPR</sequence>